<name>ICK34_TRILK</name>
<protein>
    <recommendedName>
        <fullName>U16-barytoxin-Tl1f</fullName>
        <shortName>U16-BATX-Tl1f</shortName>
    </recommendedName>
    <alternativeName>
        <fullName>Toxin ICK-34</fullName>
    </alternativeName>
</protein>
<organism>
    <name type="scientific">Trittame loki</name>
    <name type="common">Brush-footed trapdoor spider</name>
    <dbReference type="NCBI Taxonomy" id="1295018"/>
    <lineage>
        <taxon>Eukaryota</taxon>
        <taxon>Metazoa</taxon>
        <taxon>Ecdysozoa</taxon>
        <taxon>Arthropoda</taxon>
        <taxon>Chelicerata</taxon>
        <taxon>Arachnida</taxon>
        <taxon>Araneae</taxon>
        <taxon>Mygalomorphae</taxon>
        <taxon>Barychelidae</taxon>
        <taxon>Trittame</taxon>
    </lineage>
</organism>
<dbReference type="EMBL" id="GAQE01000037">
    <property type="protein sequence ID" value="JAB84517.1"/>
    <property type="molecule type" value="Transcribed_RNA"/>
</dbReference>
<dbReference type="SMR" id="W4VSA5"/>
<dbReference type="ArachnoServer" id="AS001661">
    <property type="toxin name" value="U16-barytoxin-Tl1f"/>
</dbReference>
<dbReference type="GO" id="GO:0005576">
    <property type="term" value="C:extracellular region"/>
    <property type="evidence" value="ECO:0007669"/>
    <property type="project" value="UniProtKB-SubCell"/>
</dbReference>
<dbReference type="GO" id="GO:0019871">
    <property type="term" value="F:sodium channel inhibitor activity"/>
    <property type="evidence" value="ECO:0007669"/>
    <property type="project" value="InterPro"/>
</dbReference>
<dbReference type="GO" id="GO:0090729">
    <property type="term" value="F:toxin activity"/>
    <property type="evidence" value="ECO:0007669"/>
    <property type="project" value="UniProtKB-KW"/>
</dbReference>
<dbReference type="InterPro" id="IPR012627">
    <property type="entry name" value="Toxin_22"/>
</dbReference>
<dbReference type="Pfam" id="PF08092">
    <property type="entry name" value="Toxin_22"/>
    <property type="match status" value="1"/>
</dbReference>
<accession>W4VSA5</accession>
<sequence length="116" mass="13090">MKTIIVFLSLLVLATKFGDANEGVNQEQMKEVIQNEFREDFLNEMAAMSLLQQLEAIESTLLEKEADRNSRQKRCNGENVPCGPNHSTCCSGLSCEETFGYGWWYDTPFCVKPSKG</sequence>
<proteinExistence type="evidence at transcript level"/>
<keyword id="KW-0165">Cleavage on pair of basic residues</keyword>
<keyword id="KW-1015">Disulfide bond</keyword>
<keyword id="KW-0325">Glycoprotein</keyword>
<keyword id="KW-0872">Ion channel impairing toxin</keyword>
<keyword id="KW-0960">Knottin</keyword>
<keyword id="KW-0964">Secreted</keyword>
<keyword id="KW-0732">Signal</keyword>
<keyword id="KW-0800">Toxin</keyword>
<reference key="1">
    <citation type="journal article" date="2013" name="Toxins">
        <title>A proteomics and transcriptomics investigation of the venom from the barychelid spider Trittame loki (brush-foot trapdoor).</title>
        <authorList>
            <person name="Undheim E.A."/>
            <person name="Sunagar K."/>
            <person name="Herzig V."/>
            <person name="Kely L."/>
            <person name="Low D.H."/>
            <person name="Jackson T.N."/>
            <person name="Jones A."/>
            <person name="Kurniawan N."/>
            <person name="King G.F."/>
            <person name="Ali S.A."/>
            <person name="Antunes A."/>
            <person name="Ruder T."/>
            <person name="Fry B.G."/>
        </authorList>
    </citation>
    <scope>NUCLEOTIDE SEQUENCE [MRNA]</scope>
    <source>
        <tissue>Venom gland</tissue>
    </source>
</reference>
<comment type="function">
    <text evidence="3">Ion channel inhibitor.</text>
</comment>
<comment type="subcellular location">
    <subcellularLocation>
        <location evidence="1">Secreted</location>
    </subcellularLocation>
</comment>
<comment type="tissue specificity">
    <text>Expressed by the venom gland.</text>
</comment>
<comment type="domain">
    <text evidence="1">The presence of a 'disulfide through disulfide knot' structurally defines this protein as a knottin.</text>
</comment>
<comment type="similarity">
    <text evidence="3">Belongs to the neurotoxin 14 (magi-1) family. 06 (ICK-Trit) subfamily.</text>
</comment>
<evidence type="ECO:0000250" key="1"/>
<evidence type="ECO:0000255" key="2"/>
<evidence type="ECO:0000305" key="3"/>
<feature type="signal peptide" evidence="2">
    <location>
        <begin position="1"/>
        <end position="20"/>
    </location>
</feature>
<feature type="propeptide" id="PRO_0000435157" evidence="3">
    <location>
        <begin position="21"/>
        <end position="74"/>
    </location>
</feature>
<feature type="chain" id="PRO_0000429241" description="U16-barytoxin-Tl1f">
    <location>
        <begin position="75"/>
        <end position="116"/>
    </location>
</feature>
<feature type="glycosylation site" description="N-linked (GlcNAc...) asparagine" evidence="2">
    <location>
        <position position="85"/>
    </location>
</feature>
<feature type="disulfide bond" evidence="1">
    <location>
        <begin position="75"/>
        <end position="90"/>
    </location>
</feature>
<feature type="disulfide bond" evidence="1">
    <location>
        <begin position="82"/>
        <end position="95"/>
    </location>
</feature>
<feature type="disulfide bond" evidence="1">
    <location>
        <begin position="89"/>
        <end position="110"/>
    </location>
</feature>